<gene>
    <name type="primary">folB</name>
    <name type="ordered locus">slr1626</name>
</gene>
<name>FOLB_SYNY3</name>
<proteinExistence type="inferred from homology"/>
<feature type="chain" id="PRO_0000168293" description="Probable dihydroneopterin aldolase">
    <location>
        <begin position="1"/>
        <end position="118"/>
    </location>
</feature>
<feature type="active site" description="Proton donor/acceptor" evidence="1">
    <location>
        <position position="98"/>
    </location>
</feature>
<feature type="binding site" evidence="1">
    <location>
        <position position="21"/>
    </location>
    <ligand>
        <name>substrate</name>
    </ligand>
</feature>
<feature type="binding site" evidence="1">
    <location>
        <position position="53"/>
    </location>
    <ligand>
        <name>substrate</name>
    </ligand>
</feature>
<feature type="binding site" evidence="1">
    <location>
        <begin position="72"/>
        <end position="73"/>
    </location>
    <ligand>
        <name>substrate</name>
    </ligand>
</feature>
<keyword id="KW-0289">Folate biosynthesis</keyword>
<keyword id="KW-0456">Lyase</keyword>
<keyword id="KW-1185">Reference proteome</keyword>
<sequence>MDTLNVKGIRAYGYTGYFDAEQFLGQWFEVDLTIWIDLAKAGQSDDLNDTLNYADAVAIVQKLIRESKFKMIEKLAEAIADAILGTGKTQQVKVALTKCQAPIPDFDGDVTLEILRSR</sequence>
<comment type="function">
    <text evidence="1">Catalyzes the conversion of 7,8-dihydroneopterin to 6-hydroxymethyl-7,8-dihydropterin.</text>
</comment>
<comment type="catalytic activity">
    <reaction evidence="1">
        <text>7,8-dihydroneopterin = 6-hydroxymethyl-7,8-dihydropterin + glycolaldehyde</text>
        <dbReference type="Rhea" id="RHEA:10540"/>
        <dbReference type="ChEBI" id="CHEBI:17001"/>
        <dbReference type="ChEBI" id="CHEBI:17071"/>
        <dbReference type="ChEBI" id="CHEBI:44841"/>
        <dbReference type="EC" id="4.1.2.25"/>
    </reaction>
</comment>
<comment type="pathway">
    <text>Cofactor biosynthesis; tetrahydrofolate biosynthesis; 2-amino-4-hydroxy-6-hydroxymethyl-7,8-dihydropteridine diphosphate from 7,8-dihydroneopterin triphosphate: step 3/4.</text>
</comment>
<comment type="similarity">
    <text evidence="2">Belongs to the DHNA family.</text>
</comment>
<comment type="sequence caution" evidence="2">
    <conflict type="erroneous initiation">
        <sequence resource="EMBL-CDS" id="BAA18436"/>
    </conflict>
    <text>Extended N-terminus.</text>
</comment>
<dbReference type="EC" id="4.1.2.25"/>
<dbReference type="EMBL" id="BA000022">
    <property type="protein sequence ID" value="BAA18436.1"/>
    <property type="status" value="ALT_INIT"/>
    <property type="molecule type" value="Genomic_DNA"/>
</dbReference>
<dbReference type="PIR" id="S76177">
    <property type="entry name" value="S76177"/>
</dbReference>
<dbReference type="SMR" id="P74342"/>
<dbReference type="FunCoup" id="P74342">
    <property type="interactions" value="186"/>
</dbReference>
<dbReference type="IntAct" id="P74342">
    <property type="interactions" value="4"/>
</dbReference>
<dbReference type="STRING" id="1148.gene:10499312"/>
<dbReference type="PaxDb" id="1148-1653523"/>
<dbReference type="EnsemblBacteria" id="BAA18436">
    <property type="protein sequence ID" value="BAA18436"/>
    <property type="gene ID" value="BAA18436"/>
</dbReference>
<dbReference type="KEGG" id="syn:slr1626"/>
<dbReference type="eggNOG" id="COG1539">
    <property type="taxonomic scope" value="Bacteria"/>
</dbReference>
<dbReference type="InParanoid" id="P74342"/>
<dbReference type="PhylomeDB" id="P74342"/>
<dbReference type="UniPathway" id="UPA00077">
    <property type="reaction ID" value="UER00154"/>
</dbReference>
<dbReference type="Proteomes" id="UP000001425">
    <property type="component" value="Chromosome"/>
</dbReference>
<dbReference type="GO" id="GO:0005737">
    <property type="term" value="C:cytoplasm"/>
    <property type="evidence" value="ECO:0000318"/>
    <property type="project" value="GO_Central"/>
</dbReference>
<dbReference type="GO" id="GO:0004150">
    <property type="term" value="F:dihydroneopterin aldolase activity"/>
    <property type="evidence" value="ECO:0000318"/>
    <property type="project" value="GO_Central"/>
</dbReference>
<dbReference type="GO" id="GO:0046656">
    <property type="term" value="P:folic acid biosynthetic process"/>
    <property type="evidence" value="ECO:0007669"/>
    <property type="project" value="UniProtKB-KW"/>
</dbReference>
<dbReference type="GO" id="GO:0046654">
    <property type="term" value="P:tetrahydrofolate biosynthetic process"/>
    <property type="evidence" value="ECO:0007669"/>
    <property type="project" value="UniProtKB-UniPathway"/>
</dbReference>
<dbReference type="CDD" id="cd00534">
    <property type="entry name" value="DHNA_DHNTPE"/>
    <property type="match status" value="1"/>
</dbReference>
<dbReference type="FunFam" id="3.30.1130.10:FF:000003">
    <property type="entry name" value="7,8-dihydroneopterin aldolase"/>
    <property type="match status" value="1"/>
</dbReference>
<dbReference type="Gene3D" id="3.30.1130.10">
    <property type="match status" value="1"/>
</dbReference>
<dbReference type="InterPro" id="IPR006156">
    <property type="entry name" value="Dihydroneopterin_aldolase"/>
</dbReference>
<dbReference type="InterPro" id="IPR006157">
    <property type="entry name" value="FolB_dom"/>
</dbReference>
<dbReference type="InterPro" id="IPR043133">
    <property type="entry name" value="GTP-CH-I_C/QueF"/>
</dbReference>
<dbReference type="NCBIfam" id="TIGR00525">
    <property type="entry name" value="folB"/>
    <property type="match status" value="1"/>
</dbReference>
<dbReference type="NCBIfam" id="TIGR00526">
    <property type="entry name" value="folB_dom"/>
    <property type="match status" value="1"/>
</dbReference>
<dbReference type="PANTHER" id="PTHR42844">
    <property type="entry name" value="DIHYDRONEOPTERIN ALDOLASE 1-RELATED"/>
    <property type="match status" value="1"/>
</dbReference>
<dbReference type="PANTHER" id="PTHR42844:SF1">
    <property type="entry name" value="DIHYDRONEOPTERIN ALDOLASE 1-RELATED"/>
    <property type="match status" value="1"/>
</dbReference>
<dbReference type="Pfam" id="PF02152">
    <property type="entry name" value="FolB"/>
    <property type="match status" value="1"/>
</dbReference>
<dbReference type="SMART" id="SM00905">
    <property type="entry name" value="FolB"/>
    <property type="match status" value="1"/>
</dbReference>
<dbReference type="SUPFAM" id="SSF55620">
    <property type="entry name" value="Tetrahydrobiopterin biosynthesis enzymes-like"/>
    <property type="match status" value="1"/>
</dbReference>
<protein>
    <recommendedName>
        <fullName>Probable dihydroneopterin aldolase</fullName>
        <shortName>DHNA</shortName>
        <ecNumber>4.1.2.25</ecNumber>
    </recommendedName>
    <alternativeName>
        <fullName>7,8-dihydroneopterin aldolase</fullName>
    </alternativeName>
</protein>
<organism>
    <name type="scientific">Synechocystis sp. (strain ATCC 27184 / PCC 6803 / Kazusa)</name>
    <dbReference type="NCBI Taxonomy" id="1111708"/>
    <lineage>
        <taxon>Bacteria</taxon>
        <taxon>Bacillati</taxon>
        <taxon>Cyanobacteriota</taxon>
        <taxon>Cyanophyceae</taxon>
        <taxon>Synechococcales</taxon>
        <taxon>Merismopediaceae</taxon>
        <taxon>Synechocystis</taxon>
    </lineage>
</organism>
<evidence type="ECO:0000250" key="1">
    <source>
        <dbReference type="UniProtKB" id="P0AC16"/>
    </source>
</evidence>
<evidence type="ECO:0000305" key="2"/>
<accession>P74342</accession>
<reference key="1">
    <citation type="journal article" date="1996" name="DNA Res.">
        <title>Sequence analysis of the genome of the unicellular cyanobacterium Synechocystis sp. strain PCC6803. II. Sequence determination of the entire genome and assignment of potential protein-coding regions.</title>
        <authorList>
            <person name="Kaneko T."/>
            <person name="Sato S."/>
            <person name="Kotani H."/>
            <person name="Tanaka A."/>
            <person name="Asamizu E."/>
            <person name="Nakamura Y."/>
            <person name="Miyajima N."/>
            <person name="Hirosawa M."/>
            <person name="Sugiura M."/>
            <person name="Sasamoto S."/>
            <person name="Kimura T."/>
            <person name="Hosouchi T."/>
            <person name="Matsuno A."/>
            <person name="Muraki A."/>
            <person name="Nakazaki N."/>
            <person name="Naruo K."/>
            <person name="Okumura S."/>
            <person name="Shimpo S."/>
            <person name="Takeuchi C."/>
            <person name="Wada T."/>
            <person name="Watanabe A."/>
            <person name="Yamada M."/>
            <person name="Yasuda M."/>
            <person name="Tabata S."/>
        </authorList>
    </citation>
    <scope>NUCLEOTIDE SEQUENCE [LARGE SCALE GENOMIC DNA]</scope>
    <source>
        <strain>ATCC 27184 / PCC 6803 / Kazusa</strain>
    </source>
</reference>